<proteinExistence type="inferred from homology"/>
<organism>
    <name type="scientific">Escherichia coli (strain K12 / DH10B)</name>
    <dbReference type="NCBI Taxonomy" id="316385"/>
    <lineage>
        <taxon>Bacteria</taxon>
        <taxon>Pseudomonadati</taxon>
        <taxon>Pseudomonadota</taxon>
        <taxon>Gammaproteobacteria</taxon>
        <taxon>Enterobacterales</taxon>
        <taxon>Enterobacteriaceae</taxon>
        <taxon>Escherichia</taxon>
    </lineage>
</organism>
<reference key="1">
    <citation type="journal article" date="2008" name="J. Bacteriol.">
        <title>The complete genome sequence of Escherichia coli DH10B: insights into the biology of a laboratory workhorse.</title>
        <authorList>
            <person name="Durfee T."/>
            <person name="Nelson R."/>
            <person name="Baldwin S."/>
            <person name="Plunkett G. III"/>
            <person name="Burland V."/>
            <person name="Mau B."/>
            <person name="Petrosino J.F."/>
            <person name="Qin X."/>
            <person name="Muzny D.M."/>
            <person name="Ayele M."/>
            <person name="Gibbs R.A."/>
            <person name="Csorgo B."/>
            <person name="Posfai G."/>
            <person name="Weinstock G.M."/>
            <person name="Blattner F.R."/>
        </authorList>
    </citation>
    <scope>NUCLEOTIDE SEQUENCE [LARGE SCALE GENOMIC DNA]</scope>
    <source>
        <strain>K12 / DH10B</strain>
    </source>
</reference>
<feature type="chain" id="PRO_1000115276" description="RNA pyrophosphohydrolase">
    <location>
        <begin position="1"/>
        <end position="176"/>
    </location>
</feature>
<feature type="domain" description="Nudix hydrolase" evidence="1">
    <location>
        <begin position="6"/>
        <end position="149"/>
    </location>
</feature>
<feature type="short sequence motif" description="Nudix box">
    <location>
        <begin position="38"/>
        <end position="59"/>
    </location>
</feature>
<protein>
    <recommendedName>
        <fullName evidence="1">RNA pyrophosphohydrolase</fullName>
        <ecNumber evidence="1">3.6.1.-</ecNumber>
    </recommendedName>
    <alternativeName>
        <fullName evidence="1">(Di)nucleoside polyphosphate hydrolase</fullName>
    </alternativeName>
</protein>
<evidence type="ECO:0000255" key="1">
    <source>
        <dbReference type="HAMAP-Rule" id="MF_00298"/>
    </source>
</evidence>
<dbReference type="EC" id="3.6.1.-" evidence="1"/>
<dbReference type="EMBL" id="CP000948">
    <property type="protein sequence ID" value="ACB03940.1"/>
    <property type="molecule type" value="Genomic_DNA"/>
</dbReference>
<dbReference type="RefSeq" id="WP_000564489.1">
    <property type="nucleotide sequence ID" value="NC_010473.1"/>
</dbReference>
<dbReference type="SMR" id="B1XDN6"/>
<dbReference type="GeneID" id="75203778"/>
<dbReference type="KEGG" id="ecd:ECDH10B_3000"/>
<dbReference type="HOGENOM" id="CLU_087195_3_2_6"/>
<dbReference type="GO" id="GO:0005737">
    <property type="term" value="C:cytoplasm"/>
    <property type="evidence" value="ECO:0007669"/>
    <property type="project" value="TreeGrafter"/>
</dbReference>
<dbReference type="GO" id="GO:0034353">
    <property type="term" value="F:mRNA 5'-diphosphatase activity"/>
    <property type="evidence" value="ECO:0007669"/>
    <property type="project" value="TreeGrafter"/>
</dbReference>
<dbReference type="GO" id="GO:0006402">
    <property type="term" value="P:mRNA catabolic process"/>
    <property type="evidence" value="ECO:0007669"/>
    <property type="project" value="TreeGrafter"/>
</dbReference>
<dbReference type="CDD" id="cd03671">
    <property type="entry name" value="NUDIX_Ap4A_hydrolase_plant_like"/>
    <property type="match status" value="1"/>
</dbReference>
<dbReference type="FunFam" id="3.90.79.10:FF:000001">
    <property type="entry name" value="RNA pyrophosphohydrolase"/>
    <property type="match status" value="1"/>
</dbReference>
<dbReference type="Gene3D" id="3.90.79.10">
    <property type="entry name" value="Nucleoside Triphosphate Pyrophosphohydrolase"/>
    <property type="match status" value="1"/>
</dbReference>
<dbReference type="HAMAP" id="MF_00298">
    <property type="entry name" value="Nudix_RppH"/>
    <property type="match status" value="1"/>
</dbReference>
<dbReference type="InterPro" id="IPR020476">
    <property type="entry name" value="Nudix_hydrolase"/>
</dbReference>
<dbReference type="InterPro" id="IPR015797">
    <property type="entry name" value="NUDIX_hydrolase-like_dom_sf"/>
</dbReference>
<dbReference type="InterPro" id="IPR020084">
    <property type="entry name" value="NUDIX_hydrolase_CS"/>
</dbReference>
<dbReference type="InterPro" id="IPR000086">
    <property type="entry name" value="NUDIX_hydrolase_dom"/>
</dbReference>
<dbReference type="InterPro" id="IPR022927">
    <property type="entry name" value="RppH"/>
</dbReference>
<dbReference type="NCBIfam" id="NF001934">
    <property type="entry name" value="PRK00714.1-1"/>
    <property type="match status" value="1"/>
</dbReference>
<dbReference type="NCBIfam" id="NF001937">
    <property type="entry name" value="PRK00714.1-4"/>
    <property type="match status" value="1"/>
</dbReference>
<dbReference type="NCBIfam" id="NF001938">
    <property type="entry name" value="PRK00714.1-5"/>
    <property type="match status" value="1"/>
</dbReference>
<dbReference type="PANTHER" id="PTHR23114">
    <property type="entry name" value="M7GPPPN-MRNA HYDROLASE"/>
    <property type="match status" value="1"/>
</dbReference>
<dbReference type="PANTHER" id="PTHR23114:SF17">
    <property type="entry name" value="M7GPPPN-MRNA HYDROLASE"/>
    <property type="match status" value="1"/>
</dbReference>
<dbReference type="Pfam" id="PF00293">
    <property type="entry name" value="NUDIX"/>
    <property type="match status" value="1"/>
</dbReference>
<dbReference type="PRINTS" id="PR00502">
    <property type="entry name" value="NUDIXFAMILY"/>
</dbReference>
<dbReference type="SUPFAM" id="SSF55811">
    <property type="entry name" value="Nudix"/>
    <property type="match status" value="1"/>
</dbReference>
<dbReference type="PROSITE" id="PS51462">
    <property type="entry name" value="NUDIX"/>
    <property type="match status" value="1"/>
</dbReference>
<dbReference type="PROSITE" id="PS00893">
    <property type="entry name" value="NUDIX_BOX"/>
    <property type="match status" value="1"/>
</dbReference>
<comment type="function">
    <text evidence="1">Accelerates the degradation of transcripts by removing pyrophosphate from the 5'-end of triphosphorylated RNA, leading to a more labile monophosphorylated state that can stimulate subsequent ribonuclease cleavage.</text>
</comment>
<comment type="cofactor">
    <cofactor evidence="1">
        <name>a divalent metal cation</name>
        <dbReference type="ChEBI" id="CHEBI:60240"/>
    </cofactor>
</comment>
<comment type="similarity">
    <text evidence="1">Belongs to the Nudix hydrolase family. RppH subfamily.</text>
</comment>
<gene>
    <name evidence="1" type="primary">rppH</name>
    <name evidence="1" type="synonym">nudH</name>
    <name type="ordered locus">ECDH10B_3000</name>
</gene>
<accession>B1XDN6</accession>
<sequence>MIDDDGYRPNVGIVICNRQGQVMWARRFGQHSWQFPQGGINPGESAEQAMYRELFEEVGLSRKDVRILASTRNWLRYKLPKRLVRWDTKPVCIGQKQKWFLLQLVSGDAEINMQTSSTPEFDGWRWVSYWYPVRQVVSFKRDVYRRVMKEFASVVMSLQENTPKPQNASAYRRKRG</sequence>
<keyword id="KW-0378">Hydrolase</keyword>
<name>RPPH_ECODH</name>